<organism>
    <name type="scientific">Drosophila pseudoobscura pseudoobscura</name>
    <name type="common">Fruit fly</name>
    <dbReference type="NCBI Taxonomy" id="46245"/>
    <lineage>
        <taxon>Eukaryota</taxon>
        <taxon>Metazoa</taxon>
        <taxon>Ecdysozoa</taxon>
        <taxon>Arthropoda</taxon>
        <taxon>Hexapoda</taxon>
        <taxon>Insecta</taxon>
        <taxon>Pterygota</taxon>
        <taxon>Neoptera</taxon>
        <taxon>Endopterygota</taxon>
        <taxon>Diptera</taxon>
        <taxon>Brachycera</taxon>
        <taxon>Muscomorpha</taxon>
        <taxon>Ephydroidea</taxon>
        <taxon>Drosophilidae</taxon>
        <taxon>Drosophila</taxon>
        <taxon>Sophophora</taxon>
    </lineage>
</organism>
<keyword id="KW-0217">Developmental protein</keyword>
<keyword id="KW-0221">Differentiation</keyword>
<keyword id="KW-0256">Endoplasmic reticulum</keyword>
<keyword id="KW-0472">Membrane</keyword>
<keyword id="KW-0896">Oogenesis</keyword>
<keyword id="KW-1185">Reference proteome</keyword>
<keyword id="KW-0812">Transmembrane</keyword>
<keyword id="KW-1133">Transmembrane helix</keyword>
<accession>Q297K8</accession>
<feature type="chain" id="PRO_0000313616" description="Protein jagunal">
    <location>
        <begin position="1"/>
        <end position="197"/>
    </location>
</feature>
<feature type="topological domain" description="Cytoplasmic" evidence="2">
    <location>
        <begin position="1"/>
        <end position="39"/>
    </location>
</feature>
<feature type="transmembrane region" description="Helical" evidence="2">
    <location>
        <begin position="40"/>
        <end position="60"/>
    </location>
</feature>
<feature type="topological domain" description="Lumenal" evidence="2">
    <location>
        <begin position="61"/>
        <end position="78"/>
    </location>
</feature>
<feature type="transmembrane region" description="Helical" evidence="2">
    <location>
        <begin position="79"/>
        <end position="99"/>
    </location>
</feature>
<feature type="topological domain" description="Cytoplasmic" evidence="2">
    <location>
        <begin position="100"/>
        <end position="109"/>
    </location>
</feature>
<feature type="transmembrane region" description="Helical" evidence="2">
    <location>
        <begin position="110"/>
        <end position="130"/>
    </location>
</feature>
<feature type="topological domain" description="Lumenal" evidence="2">
    <location>
        <begin position="131"/>
        <end position="159"/>
    </location>
</feature>
<feature type="transmembrane region" description="Helical" evidence="2">
    <location>
        <begin position="160"/>
        <end position="180"/>
    </location>
</feature>
<feature type="topological domain" description="Cytoplasmic" evidence="2">
    <location>
        <begin position="181"/>
        <end position="197"/>
    </location>
</feature>
<evidence type="ECO:0000250" key="1">
    <source>
        <dbReference type="UniProtKB" id="Q7K1V5"/>
    </source>
</evidence>
<evidence type="ECO:0000255" key="2"/>
<evidence type="ECO:0000305" key="3"/>
<sequence length="197" mass="23057">MATRGGPMVAGTDGNDFEFRQRVAGTYQISLLNKSRLKYCIFFHALLFFVMLAKLTSDILDRLDIFVLEIEELEVPSPLWWEYVWAGSLLTSFLGLSAARGNKVREMQKYMIAILVFAILPLLYCFAYYFSDVWEFATMDKSVELDETDIFIWRGYPYGVFWYAFCFVGFQVHGFTLYFAYNLVKVWKARTATRKFQ</sequence>
<reference key="1">
    <citation type="journal article" date="2005" name="Genome Res.">
        <title>Comparative genome sequencing of Drosophila pseudoobscura: chromosomal, gene, and cis-element evolution.</title>
        <authorList>
            <person name="Richards S."/>
            <person name="Liu Y."/>
            <person name="Bettencourt B.R."/>
            <person name="Hradecky P."/>
            <person name="Letovsky S."/>
            <person name="Nielsen R."/>
            <person name="Thornton K."/>
            <person name="Hubisz M.J."/>
            <person name="Chen R."/>
            <person name="Meisel R.P."/>
            <person name="Couronne O."/>
            <person name="Hua S."/>
            <person name="Smith M.A."/>
            <person name="Zhang P."/>
            <person name="Liu J."/>
            <person name="Bussemaker H.J."/>
            <person name="van Batenburg M.F."/>
            <person name="Howells S.L."/>
            <person name="Scherer S.E."/>
            <person name="Sodergren E."/>
            <person name="Matthews B.B."/>
            <person name="Crosby M.A."/>
            <person name="Schroeder A.J."/>
            <person name="Ortiz-Barrientos D."/>
            <person name="Rives C.M."/>
            <person name="Metzker M.L."/>
            <person name="Muzny D.M."/>
            <person name="Scott G."/>
            <person name="Steffen D."/>
            <person name="Wheeler D.A."/>
            <person name="Worley K.C."/>
            <person name="Havlak P."/>
            <person name="Durbin K.J."/>
            <person name="Egan A."/>
            <person name="Gill R."/>
            <person name="Hume J."/>
            <person name="Morgan M.B."/>
            <person name="Miner G."/>
            <person name="Hamilton C."/>
            <person name="Huang Y."/>
            <person name="Waldron L."/>
            <person name="Verduzco D."/>
            <person name="Clerc-Blankenburg K.P."/>
            <person name="Dubchak I."/>
            <person name="Noor M.A.F."/>
            <person name="Anderson W."/>
            <person name="White K.P."/>
            <person name="Clark A.G."/>
            <person name="Schaeffer S.W."/>
            <person name="Gelbart W.M."/>
            <person name="Weinstock G.M."/>
            <person name="Gibbs R.A."/>
        </authorList>
    </citation>
    <scope>NUCLEOTIDE SEQUENCE [LARGE SCALE GENOMIC DNA]</scope>
    <source>
        <strain>MV2-25 / Tucson 14011-0121.94</strain>
    </source>
</reference>
<proteinExistence type="inferred from homology"/>
<dbReference type="EMBL" id="CM000070">
    <property type="protein sequence ID" value="EAL28197.1"/>
    <property type="molecule type" value="Genomic_DNA"/>
</dbReference>
<dbReference type="RefSeq" id="XP_001359054.1">
    <property type="nucleotide sequence ID" value="XM_001359017.3"/>
</dbReference>
<dbReference type="SMR" id="Q297K8"/>
<dbReference type="FunCoup" id="Q297K8">
    <property type="interactions" value="1044"/>
</dbReference>
<dbReference type="STRING" id="46245.Q297K8"/>
<dbReference type="EnsemblMetazoa" id="FBtr0285739">
    <property type="protein sequence ID" value="FBpp0284177"/>
    <property type="gene ID" value="FBgn0070739"/>
</dbReference>
<dbReference type="GeneID" id="4802061"/>
<dbReference type="KEGG" id="dpo:4802061"/>
<dbReference type="CTD" id="40714"/>
<dbReference type="eggNOG" id="KOG4054">
    <property type="taxonomic scope" value="Eukaryota"/>
</dbReference>
<dbReference type="HOGENOM" id="CLU_121621_0_0_1"/>
<dbReference type="InParanoid" id="Q297K8"/>
<dbReference type="OMA" id="PYGVLWY"/>
<dbReference type="PhylomeDB" id="Q297K8"/>
<dbReference type="ChiTaRS" id="jagn">
    <property type="organism name" value="fly"/>
</dbReference>
<dbReference type="Proteomes" id="UP000001819">
    <property type="component" value="Chromosome 2"/>
</dbReference>
<dbReference type="Bgee" id="FBgn0070739">
    <property type="expression patterns" value="Expressed in female reproductive system and 2 other cell types or tissues"/>
</dbReference>
<dbReference type="ExpressionAtlas" id="Q297K8">
    <property type="expression patterns" value="baseline"/>
</dbReference>
<dbReference type="GO" id="GO:0005789">
    <property type="term" value="C:endoplasmic reticulum membrane"/>
    <property type="evidence" value="ECO:0000250"/>
    <property type="project" value="UniProtKB"/>
</dbReference>
<dbReference type="GO" id="GO:0022416">
    <property type="term" value="P:chaeta development"/>
    <property type="evidence" value="ECO:0000250"/>
    <property type="project" value="UniProtKB"/>
</dbReference>
<dbReference type="GO" id="GO:0007029">
    <property type="term" value="P:endoplasmic reticulum organization"/>
    <property type="evidence" value="ECO:0000250"/>
    <property type="project" value="UniProtKB"/>
</dbReference>
<dbReference type="GO" id="GO:0006887">
    <property type="term" value="P:exocytosis"/>
    <property type="evidence" value="ECO:0000250"/>
    <property type="project" value="UniProtKB"/>
</dbReference>
<dbReference type="GO" id="GO:0001555">
    <property type="term" value="P:oocyte growth"/>
    <property type="evidence" value="ECO:0000250"/>
    <property type="project" value="UniProtKB"/>
</dbReference>
<dbReference type="InterPro" id="IPR009787">
    <property type="entry name" value="Jagunal"/>
</dbReference>
<dbReference type="PANTHER" id="PTHR20955">
    <property type="entry name" value="PROTEIN JAGUNAL HOMOLOG 1"/>
    <property type="match status" value="1"/>
</dbReference>
<dbReference type="PANTHER" id="PTHR20955:SF1">
    <property type="entry name" value="PROTEIN JAGUNAL HOMOLOG 1"/>
    <property type="match status" value="1"/>
</dbReference>
<dbReference type="Pfam" id="PF07086">
    <property type="entry name" value="Jagunal"/>
    <property type="match status" value="1"/>
</dbReference>
<comment type="function">
    <text evidence="1">Required for endoplasmic reticulum organization and proper vesicular traffic during vitellogenesis. Required for oocyte and bristle growth.</text>
</comment>
<comment type="subcellular location">
    <subcellularLocation>
        <location evidence="1">Endoplasmic reticulum membrane</location>
        <topology evidence="1">Multi-pass membrane protein</topology>
    </subcellularLocation>
</comment>
<comment type="similarity">
    <text evidence="3">Belongs to the jagunal family.</text>
</comment>
<protein>
    <recommendedName>
        <fullName evidence="1">Protein jagunal</fullName>
    </recommendedName>
</protein>
<name>JAGN_DROPS</name>
<gene>
    <name evidence="1" type="primary">jagn</name>
    <name type="ORF">GA10683</name>
</gene>